<proteinExistence type="inferred from homology"/>
<dbReference type="EC" id="2.7.2.11" evidence="1"/>
<dbReference type="EMBL" id="BX548174">
    <property type="protein sequence ID" value="CAE19247.1"/>
    <property type="molecule type" value="Genomic_DNA"/>
</dbReference>
<dbReference type="RefSeq" id="WP_011132422.1">
    <property type="nucleotide sequence ID" value="NC_005072.1"/>
</dbReference>
<dbReference type="SMR" id="Q7V1R7"/>
<dbReference type="STRING" id="59919.PMM0788"/>
<dbReference type="KEGG" id="pmm:PMM0788"/>
<dbReference type="eggNOG" id="COG0263">
    <property type="taxonomic scope" value="Bacteria"/>
</dbReference>
<dbReference type="HOGENOM" id="CLU_025400_2_0_3"/>
<dbReference type="OrthoDB" id="9804434at2"/>
<dbReference type="UniPathway" id="UPA00098">
    <property type="reaction ID" value="UER00359"/>
</dbReference>
<dbReference type="Proteomes" id="UP000001026">
    <property type="component" value="Chromosome"/>
</dbReference>
<dbReference type="GO" id="GO:0005829">
    <property type="term" value="C:cytosol"/>
    <property type="evidence" value="ECO:0007669"/>
    <property type="project" value="TreeGrafter"/>
</dbReference>
<dbReference type="GO" id="GO:0005524">
    <property type="term" value="F:ATP binding"/>
    <property type="evidence" value="ECO:0007669"/>
    <property type="project" value="UniProtKB-KW"/>
</dbReference>
<dbReference type="GO" id="GO:0004349">
    <property type="term" value="F:glutamate 5-kinase activity"/>
    <property type="evidence" value="ECO:0007669"/>
    <property type="project" value="UniProtKB-UniRule"/>
</dbReference>
<dbReference type="GO" id="GO:0003723">
    <property type="term" value="F:RNA binding"/>
    <property type="evidence" value="ECO:0007669"/>
    <property type="project" value="InterPro"/>
</dbReference>
<dbReference type="GO" id="GO:0055129">
    <property type="term" value="P:L-proline biosynthetic process"/>
    <property type="evidence" value="ECO:0007669"/>
    <property type="project" value="UniProtKB-UniRule"/>
</dbReference>
<dbReference type="CDD" id="cd04242">
    <property type="entry name" value="AAK_G5K_ProB"/>
    <property type="match status" value="1"/>
</dbReference>
<dbReference type="CDD" id="cd21157">
    <property type="entry name" value="PUA_G5K"/>
    <property type="match status" value="1"/>
</dbReference>
<dbReference type="FunFam" id="3.40.1160.10:FF:000018">
    <property type="entry name" value="Glutamate 5-kinase"/>
    <property type="match status" value="1"/>
</dbReference>
<dbReference type="Gene3D" id="3.40.1160.10">
    <property type="entry name" value="Acetylglutamate kinase-like"/>
    <property type="match status" value="1"/>
</dbReference>
<dbReference type="Gene3D" id="2.30.130.10">
    <property type="entry name" value="PUA domain"/>
    <property type="match status" value="1"/>
</dbReference>
<dbReference type="HAMAP" id="MF_00456">
    <property type="entry name" value="ProB"/>
    <property type="match status" value="1"/>
</dbReference>
<dbReference type="InterPro" id="IPR036393">
    <property type="entry name" value="AceGlu_kinase-like_sf"/>
</dbReference>
<dbReference type="InterPro" id="IPR001048">
    <property type="entry name" value="Asp/Glu/Uridylate_kinase"/>
</dbReference>
<dbReference type="InterPro" id="IPR041739">
    <property type="entry name" value="G5K_ProB"/>
</dbReference>
<dbReference type="InterPro" id="IPR001057">
    <property type="entry name" value="Glu/AcGlu_kinase"/>
</dbReference>
<dbReference type="InterPro" id="IPR011529">
    <property type="entry name" value="Glu_5kinase"/>
</dbReference>
<dbReference type="InterPro" id="IPR005715">
    <property type="entry name" value="Glu_5kinase/COase_Synthase"/>
</dbReference>
<dbReference type="InterPro" id="IPR019797">
    <property type="entry name" value="Glutamate_5-kinase_CS"/>
</dbReference>
<dbReference type="InterPro" id="IPR002478">
    <property type="entry name" value="PUA"/>
</dbReference>
<dbReference type="InterPro" id="IPR015947">
    <property type="entry name" value="PUA-like_sf"/>
</dbReference>
<dbReference type="InterPro" id="IPR036974">
    <property type="entry name" value="PUA_sf"/>
</dbReference>
<dbReference type="NCBIfam" id="TIGR01027">
    <property type="entry name" value="proB"/>
    <property type="match status" value="1"/>
</dbReference>
<dbReference type="PANTHER" id="PTHR43654">
    <property type="entry name" value="GLUTAMATE 5-KINASE"/>
    <property type="match status" value="1"/>
</dbReference>
<dbReference type="PANTHER" id="PTHR43654:SF3">
    <property type="entry name" value="GLUTAMATE 5-KINASE"/>
    <property type="match status" value="1"/>
</dbReference>
<dbReference type="Pfam" id="PF00696">
    <property type="entry name" value="AA_kinase"/>
    <property type="match status" value="1"/>
</dbReference>
<dbReference type="Pfam" id="PF01472">
    <property type="entry name" value="PUA"/>
    <property type="match status" value="1"/>
</dbReference>
<dbReference type="PIRSF" id="PIRSF000729">
    <property type="entry name" value="GK"/>
    <property type="match status" value="1"/>
</dbReference>
<dbReference type="PRINTS" id="PR00474">
    <property type="entry name" value="GLU5KINASE"/>
</dbReference>
<dbReference type="SMART" id="SM00359">
    <property type="entry name" value="PUA"/>
    <property type="match status" value="1"/>
</dbReference>
<dbReference type="SUPFAM" id="SSF53633">
    <property type="entry name" value="Carbamate kinase-like"/>
    <property type="match status" value="1"/>
</dbReference>
<dbReference type="SUPFAM" id="SSF88697">
    <property type="entry name" value="PUA domain-like"/>
    <property type="match status" value="1"/>
</dbReference>
<dbReference type="PROSITE" id="PS00902">
    <property type="entry name" value="GLUTAMATE_5_KINASE"/>
    <property type="match status" value="1"/>
</dbReference>
<dbReference type="PROSITE" id="PS50890">
    <property type="entry name" value="PUA"/>
    <property type="match status" value="1"/>
</dbReference>
<comment type="function">
    <text evidence="1">Catalyzes the transfer of a phosphate group to glutamate to form L-glutamate 5-phosphate.</text>
</comment>
<comment type="catalytic activity">
    <reaction evidence="1">
        <text>L-glutamate + ATP = L-glutamyl 5-phosphate + ADP</text>
        <dbReference type="Rhea" id="RHEA:14877"/>
        <dbReference type="ChEBI" id="CHEBI:29985"/>
        <dbReference type="ChEBI" id="CHEBI:30616"/>
        <dbReference type="ChEBI" id="CHEBI:58274"/>
        <dbReference type="ChEBI" id="CHEBI:456216"/>
        <dbReference type="EC" id="2.7.2.11"/>
    </reaction>
</comment>
<comment type="pathway">
    <text evidence="1">Amino-acid biosynthesis; L-proline biosynthesis; L-glutamate 5-semialdehyde from L-glutamate: step 1/2.</text>
</comment>
<comment type="subcellular location">
    <subcellularLocation>
        <location evidence="1">Cytoplasm</location>
    </subcellularLocation>
</comment>
<comment type="similarity">
    <text evidence="1">Belongs to the glutamate 5-kinase family.</text>
</comment>
<feature type="chain" id="PRO_0000109708" description="Glutamate 5-kinase">
    <location>
        <begin position="1"/>
        <end position="360"/>
    </location>
</feature>
<feature type="domain" description="PUA" evidence="1">
    <location>
        <begin position="275"/>
        <end position="348"/>
    </location>
</feature>
<feature type="binding site" evidence="1">
    <location>
        <position position="7"/>
    </location>
    <ligand>
        <name>ATP</name>
        <dbReference type="ChEBI" id="CHEBI:30616"/>
    </ligand>
</feature>
<feature type="binding site" evidence="1">
    <location>
        <position position="47"/>
    </location>
    <ligand>
        <name>substrate</name>
    </ligand>
</feature>
<feature type="binding site" evidence="1">
    <location>
        <position position="134"/>
    </location>
    <ligand>
        <name>substrate</name>
    </ligand>
</feature>
<feature type="binding site" evidence="1">
    <location>
        <position position="146"/>
    </location>
    <ligand>
        <name>substrate</name>
    </ligand>
</feature>
<feature type="binding site" evidence="1">
    <location>
        <begin position="166"/>
        <end position="167"/>
    </location>
    <ligand>
        <name>ATP</name>
        <dbReference type="ChEBI" id="CHEBI:30616"/>
    </ligand>
</feature>
<feature type="binding site" evidence="1">
    <location>
        <begin position="210"/>
        <end position="216"/>
    </location>
    <ligand>
        <name>ATP</name>
        <dbReference type="ChEBI" id="CHEBI:30616"/>
    </ligand>
</feature>
<gene>
    <name evidence="1" type="primary">proB</name>
    <name type="ordered locus">PMM0788</name>
</gene>
<protein>
    <recommendedName>
        <fullName evidence="1">Glutamate 5-kinase</fullName>
        <ecNumber evidence="1">2.7.2.11</ecNumber>
    </recommendedName>
    <alternativeName>
        <fullName evidence="1">Gamma-glutamyl kinase</fullName>
        <shortName evidence="1">GK</shortName>
    </alternativeName>
</protein>
<sequence>MKKWVVKIGTSILRGNEDQSTEQVIESLCKSLTSFIFKGNKVILVTSGAVGLGCKKLNLNTRPKELSALQAVAAVGQVNLMTLYEKTMKKLGHNIAQILITKTDFDSRESFNNASKTFQKLIDLNVIPIVNENDSIANEELKYGDNDTLSALVALAINANKLILLTDIENLYSKDPRNNEDAHPIKEVNSNQLKIIKDKNIQNYNNEWGTGGITTKLIAAEIATKGGVEVQLADGRNENNLINIFNEKKIGTIFHPVDKPVGNKKSWLSHAIKTVGQITLDEGACLAIEQKGASLLVVGVKEVEGDFTVNQAVRIVNTNKKEVAKGITSMSSDSLKRILNKKENINSSMIVVHRDVLALT</sequence>
<accession>Q7V1R7</accession>
<evidence type="ECO:0000255" key="1">
    <source>
        <dbReference type="HAMAP-Rule" id="MF_00456"/>
    </source>
</evidence>
<reference key="1">
    <citation type="journal article" date="2003" name="Nature">
        <title>Genome divergence in two Prochlorococcus ecotypes reflects oceanic niche differentiation.</title>
        <authorList>
            <person name="Rocap G."/>
            <person name="Larimer F.W."/>
            <person name="Lamerdin J.E."/>
            <person name="Malfatti S."/>
            <person name="Chain P."/>
            <person name="Ahlgren N.A."/>
            <person name="Arellano A."/>
            <person name="Coleman M."/>
            <person name="Hauser L."/>
            <person name="Hess W.R."/>
            <person name="Johnson Z.I."/>
            <person name="Land M.L."/>
            <person name="Lindell D."/>
            <person name="Post A.F."/>
            <person name="Regala W."/>
            <person name="Shah M."/>
            <person name="Shaw S.L."/>
            <person name="Steglich C."/>
            <person name="Sullivan M.B."/>
            <person name="Ting C.S."/>
            <person name="Tolonen A."/>
            <person name="Webb E.A."/>
            <person name="Zinser E.R."/>
            <person name="Chisholm S.W."/>
        </authorList>
    </citation>
    <scope>NUCLEOTIDE SEQUENCE [LARGE SCALE GENOMIC DNA]</scope>
    <source>
        <strain>CCMP1986 / NIES-2087 / MED4</strain>
    </source>
</reference>
<organism>
    <name type="scientific">Prochlorococcus marinus subsp. pastoris (strain CCMP1986 / NIES-2087 / MED4)</name>
    <dbReference type="NCBI Taxonomy" id="59919"/>
    <lineage>
        <taxon>Bacteria</taxon>
        <taxon>Bacillati</taxon>
        <taxon>Cyanobacteriota</taxon>
        <taxon>Cyanophyceae</taxon>
        <taxon>Synechococcales</taxon>
        <taxon>Prochlorococcaceae</taxon>
        <taxon>Prochlorococcus</taxon>
    </lineage>
</organism>
<keyword id="KW-0028">Amino-acid biosynthesis</keyword>
<keyword id="KW-0067">ATP-binding</keyword>
<keyword id="KW-0963">Cytoplasm</keyword>
<keyword id="KW-0418">Kinase</keyword>
<keyword id="KW-0547">Nucleotide-binding</keyword>
<keyword id="KW-0641">Proline biosynthesis</keyword>
<keyword id="KW-0808">Transferase</keyword>
<name>PROB_PROMP</name>